<accession>P0DTH2</accession>
<proteinExistence type="inferred from homology"/>
<evidence type="ECO:0000250" key="1"/>
<evidence type="ECO:0000255" key="2"/>
<evidence type="ECO:0000305" key="3"/>
<sequence>MSLPGRRPWALPSFCVYVLVLAWVVACQQEVPTGSPSPPPGRASGLWGLVRGKVKEFMEPLVTKTRERWRWFWGPSAFRDFMQTYYDDHLRDLRPRAQAWLRSSKESLLNKAYNMCPQLLCGDGDQG</sequence>
<reference key="1">
    <citation type="submission" date="2019-03" db="EMBL/GenBank/DDBJ databases">
        <authorList>
            <person name="Johnson J."/>
            <person name="Muren E."/>
            <person name="Swofford R."/>
            <person name="Turner-Maier J."/>
            <person name="Marinescu V.D."/>
        </authorList>
    </citation>
    <scope>NUCLEOTIDE SEQUENCE [LARGE SCALE GENOMIC DNA]</scope>
</reference>
<reference key="2">
    <citation type="unpublished observations" date="2021-01">
        <authorList>
            <person name="Puppione D.L."/>
        </authorList>
    </citation>
    <scope>IDENTIFICATION</scope>
</reference>
<feature type="signal peptide" evidence="2">
    <location>
        <begin position="1"/>
        <end position="27"/>
    </location>
</feature>
<feature type="chain" id="PRO_0000452520" description="Apolipoprotein C-IV">
    <location>
        <begin position="28"/>
        <end position="127"/>
    </location>
</feature>
<name>APOC4_DICBI</name>
<protein>
    <recommendedName>
        <fullName>Apolipoprotein C-IV</fullName>
        <shortName>Apo-CIV</shortName>
        <shortName>ApoC-IV</shortName>
    </recommendedName>
    <alternativeName>
        <fullName>Apolipoprotein C4</fullName>
    </alternativeName>
</protein>
<organism>
    <name type="scientific">Diceros bicornis</name>
    <name type="common">Black rhinoceros</name>
    <dbReference type="NCBI Taxonomy" id="9805"/>
    <lineage>
        <taxon>Eukaryota</taxon>
        <taxon>Metazoa</taxon>
        <taxon>Chordata</taxon>
        <taxon>Craniata</taxon>
        <taxon>Vertebrata</taxon>
        <taxon>Euteleostomi</taxon>
        <taxon>Mammalia</taxon>
        <taxon>Eutheria</taxon>
        <taxon>Laurasiatheria</taxon>
        <taxon>Perissodactyla</taxon>
        <taxon>Rhinocerotidae</taxon>
        <taxon>Diceros</taxon>
    </lineage>
</organism>
<gene>
    <name type="primary">APOC4</name>
</gene>
<dbReference type="EMBL" id="PVJY020000258">
    <property type="status" value="NOT_ANNOTATED_CDS"/>
    <property type="molecule type" value="Genomic_DNA"/>
</dbReference>
<dbReference type="GO" id="GO:0034364">
    <property type="term" value="C:high-density lipoprotein particle"/>
    <property type="evidence" value="ECO:0007669"/>
    <property type="project" value="TreeGrafter"/>
</dbReference>
<dbReference type="GO" id="GO:0034361">
    <property type="term" value="C:very-low-density lipoprotein particle"/>
    <property type="evidence" value="ECO:0007669"/>
    <property type="project" value="TreeGrafter"/>
</dbReference>
<dbReference type="GO" id="GO:0006869">
    <property type="term" value="P:lipid transport"/>
    <property type="evidence" value="ECO:0007669"/>
    <property type="project" value="UniProtKB-KW"/>
</dbReference>
<dbReference type="GO" id="GO:0010890">
    <property type="term" value="P:positive regulation of triglyceride storage"/>
    <property type="evidence" value="ECO:0007669"/>
    <property type="project" value="TreeGrafter"/>
</dbReference>
<dbReference type="GO" id="GO:0070328">
    <property type="term" value="P:triglyceride homeostasis"/>
    <property type="evidence" value="ECO:0007669"/>
    <property type="project" value="TreeGrafter"/>
</dbReference>
<dbReference type="InterPro" id="IPR028120">
    <property type="entry name" value="APOC4"/>
</dbReference>
<dbReference type="PANTHER" id="PTHR32288">
    <property type="entry name" value="APOLIPOPROTEIN C-IV"/>
    <property type="match status" value="1"/>
</dbReference>
<dbReference type="PANTHER" id="PTHR32288:SF0">
    <property type="entry name" value="APOLIPOPROTEIN C-IV"/>
    <property type="match status" value="1"/>
</dbReference>
<dbReference type="Pfam" id="PF15119">
    <property type="entry name" value="APOC4"/>
    <property type="match status" value="1"/>
</dbReference>
<keyword id="KW-0445">Lipid transport</keyword>
<keyword id="KW-0964">Secreted</keyword>
<keyword id="KW-0732">Signal</keyword>
<keyword id="KW-0813">Transport</keyword>
<comment type="function">
    <text evidence="1">May participate in lipoprotein metabolism.</text>
</comment>
<comment type="subcellular location">
    <subcellularLocation>
        <location evidence="1">Secreted</location>
    </subcellularLocation>
</comment>
<comment type="similarity">
    <text evidence="3">Belongs to the apolipoprotein C4 family.</text>
</comment>